<name>ASTE_ECTM1</name>
<dbReference type="EC" id="3.5.1.96" evidence="1"/>
<dbReference type="EMBL" id="CP000680">
    <property type="protein sequence ID" value="ABP85660.1"/>
    <property type="molecule type" value="Genomic_DNA"/>
</dbReference>
<dbReference type="SMR" id="A4XWE4"/>
<dbReference type="STRING" id="399739.Pmen_2905"/>
<dbReference type="KEGG" id="pmy:Pmen_2905"/>
<dbReference type="PATRIC" id="fig|399739.8.peg.2944"/>
<dbReference type="eggNOG" id="COG2988">
    <property type="taxonomic scope" value="Bacteria"/>
</dbReference>
<dbReference type="HOGENOM" id="CLU_071608_0_0_6"/>
<dbReference type="OrthoDB" id="5290473at2"/>
<dbReference type="UniPathway" id="UPA00185">
    <property type="reaction ID" value="UER00283"/>
</dbReference>
<dbReference type="GO" id="GO:0016788">
    <property type="term" value="F:hydrolase activity, acting on ester bonds"/>
    <property type="evidence" value="ECO:0007669"/>
    <property type="project" value="UniProtKB-UniRule"/>
</dbReference>
<dbReference type="GO" id="GO:0009017">
    <property type="term" value="F:succinylglutamate desuccinylase activity"/>
    <property type="evidence" value="ECO:0007669"/>
    <property type="project" value="UniProtKB-EC"/>
</dbReference>
<dbReference type="GO" id="GO:0008270">
    <property type="term" value="F:zinc ion binding"/>
    <property type="evidence" value="ECO:0007669"/>
    <property type="project" value="UniProtKB-UniRule"/>
</dbReference>
<dbReference type="GO" id="GO:0019544">
    <property type="term" value="P:arginine catabolic process to glutamate"/>
    <property type="evidence" value="ECO:0007669"/>
    <property type="project" value="UniProtKB-UniRule"/>
</dbReference>
<dbReference type="GO" id="GO:0019545">
    <property type="term" value="P:arginine catabolic process to succinate"/>
    <property type="evidence" value="ECO:0007669"/>
    <property type="project" value="UniProtKB-UniRule"/>
</dbReference>
<dbReference type="CDD" id="cd03855">
    <property type="entry name" value="M14_ASTE"/>
    <property type="match status" value="1"/>
</dbReference>
<dbReference type="Gene3D" id="3.40.630.10">
    <property type="entry name" value="Zn peptidases"/>
    <property type="match status" value="1"/>
</dbReference>
<dbReference type="HAMAP" id="MF_00767">
    <property type="entry name" value="Arg_catab_AstE"/>
    <property type="match status" value="1"/>
</dbReference>
<dbReference type="InterPro" id="IPR050178">
    <property type="entry name" value="AspA/AstE_fam"/>
</dbReference>
<dbReference type="InterPro" id="IPR055438">
    <property type="entry name" value="AstE_AspA_cat"/>
</dbReference>
<dbReference type="InterPro" id="IPR007036">
    <property type="entry name" value="Aste_AspA_hybrid_dom"/>
</dbReference>
<dbReference type="InterPro" id="IPR016681">
    <property type="entry name" value="SuccinylGlu_desuccinylase"/>
</dbReference>
<dbReference type="NCBIfam" id="TIGR03242">
    <property type="entry name" value="arg_catab_astE"/>
    <property type="match status" value="1"/>
</dbReference>
<dbReference type="NCBIfam" id="NF003706">
    <property type="entry name" value="PRK05324.1"/>
    <property type="match status" value="1"/>
</dbReference>
<dbReference type="PANTHER" id="PTHR15162">
    <property type="entry name" value="ASPARTOACYLASE"/>
    <property type="match status" value="1"/>
</dbReference>
<dbReference type="PANTHER" id="PTHR15162:SF7">
    <property type="entry name" value="SUCCINYLGLUTAMATE DESUCCINYLASE"/>
    <property type="match status" value="1"/>
</dbReference>
<dbReference type="Pfam" id="PF24827">
    <property type="entry name" value="AstE_AspA_cat"/>
    <property type="match status" value="1"/>
</dbReference>
<dbReference type="Pfam" id="PF04952">
    <property type="entry name" value="AstE_AspA_hybrid"/>
    <property type="match status" value="1"/>
</dbReference>
<dbReference type="PIRSF" id="PIRSF017020">
    <property type="entry name" value="AstE"/>
    <property type="match status" value="1"/>
</dbReference>
<dbReference type="SUPFAM" id="SSF53187">
    <property type="entry name" value="Zn-dependent exopeptidases"/>
    <property type="match status" value="1"/>
</dbReference>
<proteinExistence type="inferred from homology"/>
<comment type="function">
    <text evidence="1">Transforms N(2)-succinylglutamate into succinate and glutamate.</text>
</comment>
<comment type="catalytic activity">
    <reaction evidence="1">
        <text>N-succinyl-L-glutamate + H2O = L-glutamate + succinate</text>
        <dbReference type="Rhea" id="RHEA:15169"/>
        <dbReference type="ChEBI" id="CHEBI:15377"/>
        <dbReference type="ChEBI" id="CHEBI:29985"/>
        <dbReference type="ChEBI" id="CHEBI:30031"/>
        <dbReference type="ChEBI" id="CHEBI:58763"/>
        <dbReference type="EC" id="3.5.1.96"/>
    </reaction>
</comment>
<comment type="cofactor">
    <cofactor evidence="1">
        <name>Zn(2+)</name>
        <dbReference type="ChEBI" id="CHEBI:29105"/>
    </cofactor>
    <text evidence="1">Binds 1 zinc ion per subunit.</text>
</comment>
<comment type="pathway">
    <text evidence="1">Amino-acid degradation; L-arginine degradation via AST pathway; L-glutamate and succinate from L-arginine: step 5/5.</text>
</comment>
<comment type="similarity">
    <text evidence="1">Belongs to the AspA/AstE family. Succinylglutamate desuccinylase subfamily.</text>
</comment>
<gene>
    <name evidence="1" type="primary">astE</name>
    <name type="ordered locus">Pmen_2905</name>
</gene>
<accession>A4XWE4</accession>
<organism>
    <name type="scientific">Ectopseudomonas mendocina (strain ymp)</name>
    <name type="common">Pseudomonas mendocina</name>
    <dbReference type="NCBI Taxonomy" id="399739"/>
    <lineage>
        <taxon>Bacteria</taxon>
        <taxon>Pseudomonadati</taxon>
        <taxon>Pseudomonadota</taxon>
        <taxon>Gammaproteobacteria</taxon>
        <taxon>Pseudomonadales</taxon>
        <taxon>Pseudomonadaceae</taxon>
        <taxon>Ectopseudomonas</taxon>
    </lineage>
</organism>
<reference key="1">
    <citation type="submission" date="2007-04" db="EMBL/GenBank/DDBJ databases">
        <title>Complete sequence of Pseudomonas mendocina ymp.</title>
        <authorList>
            <consortium name="US DOE Joint Genome Institute"/>
            <person name="Copeland A."/>
            <person name="Lucas S."/>
            <person name="Lapidus A."/>
            <person name="Barry K."/>
            <person name="Glavina del Rio T."/>
            <person name="Dalin E."/>
            <person name="Tice H."/>
            <person name="Pitluck S."/>
            <person name="Kiss H."/>
            <person name="Brettin T."/>
            <person name="Detter J.C."/>
            <person name="Bruce D."/>
            <person name="Han C."/>
            <person name="Schmutz J."/>
            <person name="Larimer F."/>
            <person name="Land M."/>
            <person name="Hauser L."/>
            <person name="Kyrpides N."/>
            <person name="Mikhailova N."/>
            <person name="Hersman L."/>
            <person name="Dubois J."/>
            <person name="Maurice P."/>
            <person name="Richardson P."/>
        </authorList>
    </citation>
    <scope>NUCLEOTIDE SEQUENCE [LARGE SCALE GENOMIC DNA]</scope>
    <source>
        <strain>ymp</strain>
    </source>
</reference>
<keyword id="KW-0056">Arginine metabolism</keyword>
<keyword id="KW-0378">Hydrolase</keyword>
<keyword id="KW-0479">Metal-binding</keyword>
<keyword id="KW-0862">Zinc</keyword>
<sequence>MLALGKLLELTLAGHEPSAKIQLTPDGTRLRWLDEGALEITPPAARDNGLDLLLSAGIHGNETAPIELLDRLLRGIARNELHPAARILFLFGNPEAMRRGERFVEQDINRLFNGRHEQSSGFEAIRACDLEHLAATFFGKDTGRTRLHYDLHTAIRGSKIEQFALYPWHEGRTHSRRELQRLRAAGIEAVLLQNKGSITFSSYTYGQLGAEAFTLELGKARAFGQNQLVNLDLLENALQALIEGREVIDDEPTLDGLQLFAVSREIIKHSDSFQLHLPADIENFTELEPGYLLAEDIADTRWVVEEQNARIIFPNPKVKNGLRAGILIVPDDGAGLA</sequence>
<feature type="chain" id="PRO_1000017325" description="Succinylglutamate desuccinylase">
    <location>
        <begin position="1"/>
        <end position="337"/>
    </location>
</feature>
<feature type="active site" evidence="1">
    <location>
        <position position="216"/>
    </location>
</feature>
<feature type="binding site" evidence="1">
    <location>
        <position position="59"/>
    </location>
    <ligand>
        <name>Zn(2+)</name>
        <dbReference type="ChEBI" id="CHEBI:29105"/>
    </ligand>
</feature>
<feature type="binding site" evidence="1">
    <location>
        <position position="62"/>
    </location>
    <ligand>
        <name>Zn(2+)</name>
        <dbReference type="ChEBI" id="CHEBI:29105"/>
    </ligand>
</feature>
<feature type="binding site" evidence="1">
    <location>
        <position position="152"/>
    </location>
    <ligand>
        <name>Zn(2+)</name>
        <dbReference type="ChEBI" id="CHEBI:29105"/>
    </ligand>
</feature>
<evidence type="ECO:0000255" key="1">
    <source>
        <dbReference type="HAMAP-Rule" id="MF_00767"/>
    </source>
</evidence>
<protein>
    <recommendedName>
        <fullName evidence="1">Succinylglutamate desuccinylase</fullName>
        <ecNumber evidence="1">3.5.1.96</ecNumber>
    </recommendedName>
</protein>